<accession>R9QMR0</accession>
<comment type="function">
    <text evidence="4">Monoterpene synthase (TPS) involved in the biosynthesis of monoterpene natural products included in conifer oleoresin secretions and volatile emissions; these compounds contribute to biotic and abiotic stress defense against herbivores and pathogens (PubMed:23679205). Catalyzes the conversion of (2E)-geranyl diphosphate (GPP) to (-)-beta-pinene and, to a lower extent, to (-)-alpha-pinene (PubMed:23679205).</text>
</comment>
<comment type="catalytic activity">
    <reaction evidence="4">
        <text>(2E)-geranyl diphosphate = (1S,5S)-beta-pinene + diphosphate</text>
        <dbReference type="Rhea" id="RHEA:25496"/>
        <dbReference type="ChEBI" id="CHEBI:28359"/>
        <dbReference type="ChEBI" id="CHEBI:33019"/>
        <dbReference type="ChEBI" id="CHEBI:58057"/>
        <dbReference type="EC" id="4.2.3.120"/>
    </reaction>
    <physiologicalReaction direction="left-to-right" evidence="4">
        <dbReference type="Rhea" id="RHEA:25497"/>
    </physiologicalReaction>
</comment>
<comment type="catalytic activity">
    <reaction evidence="4">
        <text>(2E)-geranyl diphosphate = (1S,5S)-alpha-pinene + diphosphate</text>
        <dbReference type="Rhea" id="RHEA:25488"/>
        <dbReference type="ChEBI" id="CHEBI:28660"/>
        <dbReference type="ChEBI" id="CHEBI:33019"/>
        <dbReference type="ChEBI" id="CHEBI:58057"/>
        <dbReference type="EC" id="4.2.3.119"/>
    </reaction>
    <physiologicalReaction direction="left-to-right" evidence="4">
        <dbReference type="Rhea" id="RHEA:25489"/>
    </physiologicalReaction>
</comment>
<comment type="cofactor">
    <cofactor evidence="1">
        <name>Mg(2+)</name>
        <dbReference type="ChEBI" id="CHEBI:18420"/>
    </cofactor>
    <cofactor evidence="1">
        <name>Mn(2+)</name>
        <dbReference type="ChEBI" id="CHEBI:29035"/>
    </cofactor>
    <text evidence="1">Binds 3 Mg(2+) or Mn(2+) ions per subunit.</text>
</comment>
<comment type="pathway">
    <text evidence="4">Terpene metabolism; oleoresin biosynthesis.</text>
</comment>
<comment type="pathway">
    <text evidence="4">Secondary metabolite biosynthesis; terpenoid biosynthesis.</text>
</comment>
<comment type="subcellular location">
    <subcellularLocation>
        <location evidence="3">Plastid</location>
        <location evidence="3">Chloroplast</location>
    </subcellularLocation>
</comment>
<comment type="domain">
    <text evidence="6">The Asp-Asp-Xaa-Xaa-Asp/Glu (DDXXD/E) motif is important for the catalytic activity, presumably through binding to Mg(2+).</text>
</comment>
<comment type="similarity">
    <text evidence="6">Belongs to the terpene synthase family. Tpsd subfamily.</text>
</comment>
<sequence length="628" mass="71951">MDLISVLPSASKSCVCLHKPLSSSTHKLKPFCRTIRILGMPRPRKSVLMVSSMSISVNTLVSDDAVQRRTGGYHSNLWNDDVIQFLSTPYGELAYRERAERLIDEVRNIFNSMSLEDGEFSDLIIQRLWMVDNVERLGIDRHFKNEIKSALDYVYSYWSQKGIGCGTKSIITDLNSTALGFRTLRLHGYPVSADVLKHFRNQIGQFVSCPSETEEDIRSMVNLYRASLIAFPGEEVMEEAESFSEKYLKETLQKIPDCSLSREIGDVLEHGWHTNLPRFEARNYIDVFGQDTKNMESNRKTEKLLELAKLEFNIFQSIQKTELESLLRWWNDSGSPQITFTRHRHVEYYTLASCIAFEPQHSGFRLGFAKACHIITVLDDMYDLFGTVEELKLFTAAIKRWDPSATDCLPQYMKGIYMMVYNTVNEMSAEAQKAQGRDTLNYARQAWEVYLDSYVQEAKWIATGYLPTFEEYLENGKVSSGHRVSALQPMLTMDIPFPPHILKEVDFPSNLNDLACAILRLRGDTRCYQEDRARGEETSCISCYMKDNPGATEEDALNHLNVMISGVIKELNWELLKPDSSVPISSKKINFDITRAFHYGYKYRDGYSVSSVETKSLVMRTLLEPVPL</sequence>
<evidence type="ECO:0000250" key="1">
    <source>
        <dbReference type="UniProtKB" id="A0A1C9J6A7"/>
    </source>
</evidence>
<evidence type="ECO:0000250" key="2">
    <source>
        <dbReference type="UniProtKB" id="Q40577"/>
    </source>
</evidence>
<evidence type="ECO:0000255" key="3"/>
<evidence type="ECO:0000269" key="4">
    <source>
    </source>
</evidence>
<evidence type="ECO:0000303" key="5">
    <source>
    </source>
</evidence>
<evidence type="ECO:0000305" key="6"/>
<dbReference type="EC" id="4.2.3.120" evidence="4"/>
<dbReference type="EC" id="4.2.3.119" evidence="4"/>
<dbReference type="EMBL" id="JQ240291">
    <property type="protein sequence ID" value="AFU73843.1"/>
    <property type="molecule type" value="mRNA"/>
</dbReference>
<dbReference type="SMR" id="R9QMR0"/>
<dbReference type="BRENDA" id="4.2.3.120">
    <property type="organism ID" value="4842"/>
</dbReference>
<dbReference type="UniPathway" id="UPA00213"/>
<dbReference type="UniPathway" id="UPA00924"/>
<dbReference type="GO" id="GO:0009507">
    <property type="term" value="C:chloroplast"/>
    <property type="evidence" value="ECO:0007669"/>
    <property type="project" value="UniProtKB-SubCell"/>
</dbReference>
<dbReference type="GO" id="GO:0000287">
    <property type="term" value="F:magnesium ion binding"/>
    <property type="evidence" value="ECO:0007669"/>
    <property type="project" value="InterPro"/>
</dbReference>
<dbReference type="GO" id="GO:0050550">
    <property type="term" value="F:pinene synthase activity"/>
    <property type="evidence" value="ECO:0000314"/>
    <property type="project" value="UniProtKB"/>
</dbReference>
<dbReference type="GO" id="GO:0010333">
    <property type="term" value="F:terpene synthase activity"/>
    <property type="evidence" value="ECO:0000314"/>
    <property type="project" value="UniProtKB"/>
</dbReference>
<dbReference type="GO" id="GO:0018867">
    <property type="term" value="P:alpha-pinene metabolic process"/>
    <property type="evidence" value="ECO:0000314"/>
    <property type="project" value="UniProtKB"/>
</dbReference>
<dbReference type="GO" id="GO:0016102">
    <property type="term" value="P:diterpenoid biosynthetic process"/>
    <property type="evidence" value="ECO:0007669"/>
    <property type="project" value="InterPro"/>
</dbReference>
<dbReference type="GO" id="GO:0010597">
    <property type="term" value="P:green leaf volatile biosynthetic process"/>
    <property type="evidence" value="ECO:0000314"/>
    <property type="project" value="UniProtKB"/>
</dbReference>
<dbReference type="GO" id="GO:0016114">
    <property type="term" value="P:terpenoid biosynthetic process"/>
    <property type="evidence" value="ECO:0000314"/>
    <property type="project" value="UniProtKB"/>
</dbReference>
<dbReference type="CDD" id="cd00684">
    <property type="entry name" value="Terpene_cyclase_plant_C1"/>
    <property type="match status" value="1"/>
</dbReference>
<dbReference type="FunFam" id="1.50.10.130:FF:000004">
    <property type="entry name" value="Carene synthase, chloroplastic"/>
    <property type="match status" value="1"/>
</dbReference>
<dbReference type="FunFam" id="1.10.600.10:FF:000005">
    <property type="entry name" value="Ent-kaur-16-ene synthase, chloroplastic"/>
    <property type="match status" value="1"/>
</dbReference>
<dbReference type="Gene3D" id="1.10.600.10">
    <property type="entry name" value="Farnesyl Diphosphate Synthase"/>
    <property type="match status" value="1"/>
</dbReference>
<dbReference type="Gene3D" id="1.50.10.130">
    <property type="entry name" value="Terpene synthase, N-terminal domain"/>
    <property type="match status" value="1"/>
</dbReference>
<dbReference type="InterPro" id="IPR008949">
    <property type="entry name" value="Isoprenoid_synthase_dom_sf"/>
</dbReference>
<dbReference type="InterPro" id="IPR034741">
    <property type="entry name" value="Terpene_cyclase-like_1_C"/>
</dbReference>
<dbReference type="InterPro" id="IPR044814">
    <property type="entry name" value="Terpene_cyclase_plant_C1"/>
</dbReference>
<dbReference type="InterPro" id="IPR001906">
    <property type="entry name" value="Terpene_synth_N"/>
</dbReference>
<dbReference type="InterPro" id="IPR036965">
    <property type="entry name" value="Terpene_synth_N_sf"/>
</dbReference>
<dbReference type="InterPro" id="IPR050148">
    <property type="entry name" value="Terpene_synthase-like"/>
</dbReference>
<dbReference type="InterPro" id="IPR005630">
    <property type="entry name" value="Terpene_synthase_metal-bd"/>
</dbReference>
<dbReference type="InterPro" id="IPR008930">
    <property type="entry name" value="Terpenoid_cyclase/PrenylTrfase"/>
</dbReference>
<dbReference type="PANTHER" id="PTHR31225">
    <property type="entry name" value="OS04G0344100 PROTEIN-RELATED"/>
    <property type="match status" value="1"/>
</dbReference>
<dbReference type="PANTHER" id="PTHR31225:SF137">
    <property type="entry name" value="TERPENE SYNTHASE 11-RELATED"/>
    <property type="match status" value="1"/>
</dbReference>
<dbReference type="Pfam" id="PF01397">
    <property type="entry name" value="Terpene_synth"/>
    <property type="match status" value="1"/>
</dbReference>
<dbReference type="Pfam" id="PF03936">
    <property type="entry name" value="Terpene_synth_C"/>
    <property type="match status" value="1"/>
</dbReference>
<dbReference type="SFLD" id="SFLDS00005">
    <property type="entry name" value="Isoprenoid_Synthase_Type_I"/>
    <property type="match status" value="1"/>
</dbReference>
<dbReference type="SFLD" id="SFLDG01019">
    <property type="entry name" value="Terpene_Cyclase_Like_1_C_Termi"/>
    <property type="match status" value="1"/>
</dbReference>
<dbReference type="SFLD" id="SFLDG01014">
    <property type="entry name" value="Terpene_Cyclase_Like_1_N-term"/>
    <property type="match status" value="1"/>
</dbReference>
<dbReference type="SUPFAM" id="SSF48239">
    <property type="entry name" value="Terpenoid cyclases/Protein prenyltransferases"/>
    <property type="match status" value="1"/>
</dbReference>
<dbReference type="SUPFAM" id="SSF48576">
    <property type="entry name" value="Terpenoid synthases"/>
    <property type="match status" value="1"/>
</dbReference>
<proteinExistence type="evidence at protein level"/>
<protein>
    <recommendedName>
        <fullName evidence="5">(-)-beta-pinene synthase 1, chloroplastic</fullName>
        <ecNumber evidence="4">4.2.3.120</ecNumber>
    </recommendedName>
    <alternativeName>
        <fullName evidence="5">(-)-alpha-pinene synthase (-)betapin1, chloroplastic</fullName>
        <ecNumber evidence="4">4.2.3.119</ecNumber>
    </alternativeName>
    <alternativeName>
        <fullName evidence="5">Terpene synthase (-)betapin1</fullName>
        <shortName evidence="5">PbTPS-(-)betapin1</shortName>
    </alternativeName>
</protein>
<reference key="1">
    <citation type="journal article" date="2013" name="BMC Plant Biol.">
        <title>Transcriptome resources and functional characterization of monoterpene synthases for two host species of the mountain pine beetle, lodgepole pine (Pinus contorta) and jack pine (Pinus banksiana).</title>
        <authorList>
            <person name="Hall D.E."/>
            <person name="Yuen M.M.S."/>
            <person name="Jancsik S."/>
            <person name="Quesada A.L."/>
            <person name="Dullat H.K."/>
            <person name="Li M."/>
            <person name="Henderson H."/>
            <person name="Arango-Velez A."/>
            <person name="Liao N.Y."/>
            <person name="Docking R.T."/>
            <person name="Chan S.K."/>
            <person name="Cooke J.E.K."/>
            <person name="Breuil C."/>
            <person name="Jones S.J.M."/>
            <person name="Keeling C.I."/>
            <person name="Bohlmann J."/>
        </authorList>
    </citation>
    <scope>NUCLEOTIDE SEQUENCE [MRNA]</scope>
    <scope>FUNCTION</scope>
    <scope>CATALYTIC ACTIVITY</scope>
    <scope>PATHWAY</scope>
</reference>
<keyword id="KW-0150">Chloroplast</keyword>
<keyword id="KW-0456">Lyase</keyword>
<keyword id="KW-0460">Magnesium</keyword>
<keyword id="KW-0479">Metal-binding</keyword>
<keyword id="KW-0934">Plastid</keyword>
<keyword id="KW-0809">Transit peptide</keyword>
<organism>
    <name type="scientific">Pinus banksiana</name>
    <name type="common">Jack pine</name>
    <name type="synonym">Pinus divaricata</name>
    <dbReference type="NCBI Taxonomy" id="3353"/>
    <lineage>
        <taxon>Eukaryota</taxon>
        <taxon>Viridiplantae</taxon>
        <taxon>Streptophyta</taxon>
        <taxon>Embryophyta</taxon>
        <taxon>Tracheophyta</taxon>
        <taxon>Spermatophyta</taxon>
        <taxon>Pinopsida</taxon>
        <taxon>Pinidae</taxon>
        <taxon>Conifers I</taxon>
        <taxon>Pinales</taxon>
        <taxon>Pinaceae</taxon>
        <taxon>Pinus</taxon>
        <taxon>Pinus subgen. Pinus</taxon>
    </lineage>
</organism>
<gene>
    <name evidence="5" type="primary">TPS-(-)Bpin1</name>
</gene>
<feature type="transit peptide" description="Chloroplast" evidence="3">
    <location>
        <begin position="1"/>
        <end position="51"/>
    </location>
</feature>
<feature type="chain" id="PRO_0000455019" description="(-)-beta-pinene synthase 1, chloroplastic">
    <location>
        <begin position="52"/>
        <end position="628"/>
    </location>
</feature>
<feature type="short sequence motif" description="DDXXD motif" evidence="6">
    <location>
        <begin position="379"/>
        <end position="383"/>
    </location>
</feature>
<feature type="binding site" evidence="2">
    <location>
        <position position="379"/>
    </location>
    <ligand>
        <name>Mg(2+)</name>
        <dbReference type="ChEBI" id="CHEBI:18420"/>
        <label>1</label>
    </ligand>
</feature>
<feature type="binding site" evidence="2">
    <location>
        <position position="379"/>
    </location>
    <ligand>
        <name>Mg(2+)</name>
        <dbReference type="ChEBI" id="CHEBI:18420"/>
        <label>2</label>
    </ligand>
</feature>
<feature type="binding site" evidence="2">
    <location>
        <position position="383"/>
    </location>
    <ligand>
        <name>Mg(2+)</name>
        <dbReference type="ChEBI" id="CHEBI:18420"/>
        <label>1</label>
    </ligand>
</feature>
<feature type="binding site" evidence="2">
    <location>
        <position position="383"/>
    </location>
    <ligand>
        <name>Mg(2+)</name>
        <dbReference type="ChEBI" id="CHEBI:18420"/>
        <label>2</label>
    </ligand>
</feature>
<feature type="binding site" evidence="2">
    <location>
        <position position="531"/>
    </location>
    <ligand>
        <name>Mg(2+)</name>
        <dbReference type="ChEBI" id="CHEBI:18420"/>
        <label>3</label>
    </ligand>
</feature>
<name>SBPN1_PINBN</name>